<proteinExistence type="inferred from homology"/>
<sequence length="475" mass="52697">MSPQTETKASVGFKAGVKEYKLTYYTPDYEPHDHDILAAFRVTPQPGVPPEEAGAAVAAESSTGTWTTVWTDGLTSLDRYKGRCYHIEPVPGEENQFIAYVAYPLDLFEEGSVTNMFTSIVGNVFGFKALRALRLEDLRIPPAYTKTFQGPPHGIQVERDKLNKYGRPLLGCTIKPKLGLSAKNYGRAVYECLRGGLDFTKDDENVNSQPFMRWRDRFLFCAEALFKSQVETGEIKGHYLNATAGTCEEMIKRAVFARELGVPIVMHDYLTGGFTANTSLAHYCRDNGLLLHIHRAMHAVIDRQKNHGIHFRVLAKALRLSGGDHIHSGTVVGKLEGERDITLGFVDLLRDDFVEKDRSRGIYFTQPWVSLPGVIPVASGGIHVWHMPALTEIFGDDSVLQFGGGTLGHPWGNAPGAVANRVALEACVQARNEGRDLAREGNDIIRKAAKWSPELAAACEVWKEIKFEFQAMDTL</sequence>
<geneLocation type="chloroplast"/>
<reference key="1">
    <citation type="submission" date="1997-01" db="EMBL/GenBank/DDBJ databases">
        <title>Phylogenetic relationships among Fagopyrum species revealed by DNA sequencing of rbcL, accD and their intergenic region.</title>
        <authorList>
            <person name="Yasui Y."/>
            <person name="Ohnishi O."/>
        </authorList>
    </citation>
    <scope>NUCLEOTIDE SEQUENCE [GENOMIC DNA]</scope>
</reference>
<reference key="2">
    <citation type="journal article" date="2008" name="BMC Plant Biol.">
        <title>Comparative chloroplast genomics and phylogenetics of Fagopyrum esculentum ssp. ancestrale - a wild ancestor of cultivated buckwheat.</title>
        <authorList>
            <person name="Logacheva M.D."/>
            <person name="Samigullin T.H."/>
            <person name="Dhingra A."/>
            <person name="Penin A.A."/>
        </authorList>
    </citation>
    <scope>NUCLEOTIDE SEQUENCE [LARGE SCALE GENOMIC DNA]</scope>
</reference>
<keyword id="KW-0007">Acetylation</keyword>
<keyword id="KW-0113">Calvin cycle</keyword>
<keyword id="KW-0120">Carbon dioxide fixation</keyword>
<keyword id="KW-0150">Chloroplast</keyword>
<keyword id="KW-1015">Disulfide bond</keyword>
<keyword id="KW-0456">Lyase</keyword>
<keyword id="KW-0460">Magnesium</keyword>
<keyword id="KW-0479">Metal-binding</keyword>
<keyword id="KW-0488">Methylation</keyword>
<keyword id="KW-0503">Monooxygenase</keyword>
<keyword id="KW-0560">Oxidoreductase</keyword>
<keyword id="KW-0601">Photorespiration</keyword>
<keyword id="KW-0602">Photosynthesis</keyword>
<keyword id="KW-0934">Plastid</keyword>
<feature type="propeptide" id="PRO_0000355774" evidence="1">
    <location>
        <begin position="1"/>
        <end position="2"/>
    </location>
</feature>
<feature type="chain" id="PRO_0000355775" description="Ribulose bisphosphate carboxylase large chain">
    <location>
        <begin position="3"/>
        <end position="475"/>
    </location>
</feature>
<feature type="active site" description="Proton acceptor" evidence="1">
    <location>
        <position position="175"/>
    </location>
</feature>
<feature type="active site" description="Proton acceptor" evidence="1">
    <location>
        <position position="294"/>
    </location>
</feature>
<feature type="binding site" description="in homodimeric partner" evidence="1">
    <location>
        <position position="123"/>
    </location>
    <ligand>
        <name>substrate</name>
    </ligand>
</feature>
<feature type="binding site" evidence="1">
    <location>
        <position position="173"/>
    </location>
    <ligand>
        <name>substrate</name>
    </ligand>
</feature>
<feature type="binding site" evidence="1">
    <location>
        <position position="177"/>
    </location>
    <ligand>
        <name>substrate</name>
    </ligand>
</feature>
<feature type="binding site" description="via carbamate group" evidence="1">
    <location>
        <position position="201"/>
    </location>
    <ligand>
        <name>Mg(2+)</name>
        <dbReference type="ChEBI" id="CHEBI:18420"/>
    </ligand>
</feature>
<feature type="binding site" evidence="1">
    <location>
        <position position="203"/>
    </location>
    <ligand>
        <name>Mg(2+)</name>
        <dbReference type="ChEBI" id="CHEBI:18420"/>
    </ligand>
</feature>
<feature type="binding site" evidence="1">
    <location>
        <position position="204"/>
    </location>
    <ligand>
        <name>Mg(2+)</name>
        <dbReference type="ChEBI" id="CHEBI:18420"/>
    </ligand>
</feature>
<feature type="binding site" evidence="1">
    <location>
        <position position="295"/>
    </location>
    <ligand>
        <name>substrate</name>
    </ligand>
</feature>
<feature type="binding site" evidence="1">
    <location>
        <position position="327"/>
    </location>
    <ligand>
        <name>substrate</name>
    </ligand>
</feature>
<feature type="binding site" evidence="1">
    <location>
        <position position="379"/>
    </location>
    <ligand>
        <name>substrate</name>
    </ligand>
</feature>
<feature type="site" description="Transition state stabilizer" evidence="1">
    <location>
        <position position="334"/>
    </location>
</feature>
<feature type="modified residue" description="N-acetylproline" evidence="1">
    <location>
        <position position="3"/>
    </location>
</feature>
<feature type="modified residue" description="N6,N6,N6-trimethyllysine" evidence="1">
    <location>
        <position position="14"/>
    </location>
</feature>
<feature type="modified residue" description="N6-carboxylysine" evidence="1">
    <location>
        <position position="201"/>
    </location>
</feature>
<feature type="disulfide bond" description="Interchain; in linked form" evidence="1">
    <location>
        <position position="247"/>
    </location>
</feature>
<dbReference type="EC" id="4.1.1.39" evidence="1"/>
<dbReference type="EMBL" id="AB000310">
    <property type="protein sequence ID" value="BAA34834.1"/>
    <property type="molecule type" value="Genomic_DNA"/>
</dbReference>
<dbReference type="EMBL" id="EU254477">
    <property type="protein sequence ID" value="ABY79740.1"/>
    <property type="molecule type" value="Genomic_DNA"/>
</dbReference>
<dbReference type="RefSeq" id="YP_001936525.1">
    <property type="nucleotide sequence ID" value="NC_010776.1"/>
</dbReference>
<dbReference type="SMR" id="Q7GDW5"/>
<dbReference type="GeneID" id="6335941"/>
<dbReference type="GO" id="GO:0009507">
    <property type="term" value="C:chloroplast"/>
    <property type="evidence" value="ECO:0007669"/>
    <property type="project" value="UniProtKB-SubCell"/>
</dbReference>
<dbReference type="GO" id="GO:0000287">
    <property type="term" value="F:magnesium ion binding"/>
    <property type="evidence" value="ECO:0007669"/>
    <property type="project" value="UniProtKB-UniRule"/>
</dbReference>
<dbReference type="GO" id="GO:0004497">
    <property type="term" value="F:monooxygenase activity"/>
    <property type="evidence" value="ECO:0007669"/>
    <property type="project" value="UniProtKB-KW"/>
</dbReference>
<dbReference type="GO" id="GO:0016984">
    <property type="term" value="F:ribulose-bisphosphate carboxylase activity"/>
    <property type="evidence" value="ECO:0007669"/>
    <property type="project" value="UniProtKB-UniRule"/>
</dbReference>
<dbReference type="GO" id="GO:0009853">
    <property type="term" value="P:photorespiration"/>
    <property type="evidence" value="ECO:0007669"/>
    <property type="project" value="UniProtKB-KW"/>
</dbReference>
<dbReference type="GO" id="GO:0019253">
    <property type="term" value="P:reductive pentose-phosphate cycle"/>
    <property type="evidence" value="ECO:0007669"/>
    <property type="project" value="UniProtKB-UniRule"/>
</dbReference>
<dbReference type="CDD" id="cd08212">
    <property type="entry name" value="RuBisCO_large_I"/>
    <property type="match status" value="1"/>
</dbReference>
<dbReference type="FunFam" id="3.20.20.110:FF:000001">
    <property type="entry name" value="Ribulose bisphosphate carboxylase large chain"/>
    <property type="match status" value="1"/>
</dbReference>
<dbReference type="FunFam" id="3.30.70.150:FF:000001">
    <property type="entry name" value="Ribulose bisphosphate carboxylase large chain"/>
    <property type="match status" value="1"/>
</dbReference>
<dbReference type="Gene3D" id="3.20.20.110">
    <property type="entry name" value="Ribulose bisphosphate carboxylase, large subunit, C-terminal domain"/>
    <property type="match status" value="1"/>
</dbReference>
<dbReference type="Gene3D" id="3.30.70.150">
    <property type="entry name" value="RuBisCO large subunit, N-terminal domain"/>
    <property type="match status" value="1"/>
</dbReference>
<dbReference type="HAMAP" id="MF_01338">
    <property type="entry name" value="RuBisCO_L_type1"/>
    <property type="match status" value="1"/>
</dbReference>
<dbReference type="InterPro" id="IPR033966">
    <property type="entry name" value="RuBisCO"/>
</dbReference>
<dbReference type="InterPro" id="IPR020878">
    <property type="entry name" value="RuBisCo_large_chain_AS"/>
</dbReference>
<dbReference type="InterPro" id="IPR000685">
    <property type="entry name" value="RuBisCO_lsu_C"/>
</dbReference>
<dbReference type="InterPro" id="IPR036376">
    <property type="entry name" value="RuBisCO_lsu_C_sf"/>
</dbReference>
<dbReference type="InterPro" id="IPR017443">
    <property type="entry name" value="RuBisCO_lsu_fd_N"/>
</dbReference>
<dbReference type="InterPro" id="IPR036422">
    <property type="entry name" value="RuBisCO_lsu_N_sf"/>
</dbReference>
<dbReference type="InterPro" id="IPR020888">
    <property type="entry name" value="RuBisCO_lsuI"/>
</dbReference>
<dbReference type="NCBIfam" id="NF003252">
    <property type="entry name" value="PRK04208.1"/>
    <property type="match status" value="1"/>
</dbReference>
<dbReference type="PANTHER" id="PTHR42704">
    <property type="entry name" value="RIBULOSE BISPHOSPHATE CARBOXYLASE"/>
    <property type="match status" value="1"/>
</dbReference>
<dbReference type="PANTHER" id="PTHR42704:SF16">
    <property type="entry name" value="RIBULOSE BISPHOSPHATE CARBOXYLASE LARGE CHAIN"/>
    <property type="match status" value="1"/>
</dbReference>
<dbReference type="Pfam" id="PF00016">
    <property type="entry name" value="RuBisCO_large"/>
    <property type="match status" value="1"/>
</dbReference>
<dbReference type="Pfam" id="PF02788">
    <property type="entry name" value="RuBisCO_large_N"/>
    <property type="match status" value="1"/>
</dbReference>
<dbReference type="SFLD" id="SFLDG01052">
    <property type="entry name" value="RuBisCO"/>
    <property type="match status" value="1"/>
</dbReference>
<dbReference type="SFLD" id="SFLDS00014">
    <property type="entry name" value="RuBisCO"/>
    <property type="match status" value="1"/>
</dbReference>
<dbReference type="SFLD" id="SFLDG00301">
    <property type="entry name" value="RuBisCO-like_proteins"/>
    <property type="match status" value="1"/>
</dbReference>
<dbReference type="SUPFAM" id="SSF51649">
    <property type="entry name" value="RuBisCo, C-terminal domain"/>
    <property type="match status" value="1"/>
</dbReference>
<dbReference type="SUPFAM" id="SSF54966">
    <property type="entry name" value="RuBisCO, large subunit, small (N-terminal) domain"/>
    <property type="match status" value="1"/>
</dbReference>
<dbReference type="PROSITE" id="PS00157">
    <property type="entry name" value="RUBISCO_LARGE"/>
    <property type="match status" value="1"/>
</dbReference>
<accession>Q7GDW5</accession>
<organism>
    <name type="scientific">Fagopyrum esculentum subsp. ancestrale</name>
    <name type="common">Wild buckwheat</name>
    <dbReference type="NCBI Taxonomy" id="180217"/>
    <lineage>
        <taxon>Eukaryota</taxon>
        <taxon>Viridiplantae</taxon>
        <taxon>Streptophyta</taxon>
        <taxon>Embryophyta</taxon>
        <taxon>Tracheophyta</taxon>
        <taxon>Spermatophyta</taxon>
        <taxon>Magnoliopsida</taxon>
        <taxon>eudicotyledons</taxon>
        <taxon>Gunneridae</taxon>
        <taxon>Pentapetalae</taxon>
        <taxon>Caryophyllales</taxon>
        <taxon>Polygonaceae</taxon>
        <taxon>Polygonoideae</taxon>
        <taxon>Fagopyreae</taxon>
        <taxon>Fagopyrum</taxon>
    </lineage>
</organism>
<protein>
    <recommendedName>
        <fullName evidence="1">Ribulose bisphosphate carboxylase large chain</fullName>
        <shortName evidence="1">RuBisCO large subunit</shortName>
        <ecNumber evidence="1">4.1.1.39</ecNumber>
    </recommendedName>
</protein>
<comment type="function">
    <text evidence="1">RuBisCO catalyzes two reactions: the carboxylation of D-ribulose 1,5-bisphosphate, the primary event in carbon dioxide fixation, as well as the oxidative fragmentation of the pentose substrate in the photorespiration process. Both reactions occur simultaneously and in competition at the same active site.</text>
</comment>
<comment type="catalytic activity">
    <reaction evidence="1">
        <text>2 (2R)-3-phosphoglycerate + 2 H(+) = D-ribulose 1,5-bisphosphate + CO2 + H2O</text>
        <dbReference type="Rhea" id="RHEA:23124"/>
        <dbReference type="ChEBI" id="CHEBI:15377"/>
        <dbReference type="ChEBI" id="CHEBI:15378"/>
        <dbReference type="ChEBI" id="CHEBI:16526"/>
        <dbReference type="ChEBI" id="CHEBI:57870"/>
        <dbReference type="ChEBI" id="CHEBI:58272"/>
        <dbReference type="EC" id="4.1.1.39"/>
    </reaction>
</comment>
<comment type="catalytic activity">
    <reaction evidence="1">
        <text>D-ribulose 1,5-bisphosphate + O2 = 2-phosphoglycolate + (2R)-3-phosphoglycerate + 2 H(+)</text>
        <dbReference type="Rhea" id="RHEA:36631"/>
        <dbReference type="ChEBI" id="CHEBI:15378"/>
        <dbReference type="ChEBI" id="CHEBI:15379"/>
        <dbReference type="ChEBI" id="CHEBI:57870"/>
        <dbReference type="ChEBI" id="CHEBI:58033"/>
        <dbReference type="ChEBI" id="CHEBI:58272"/>
    </reaction>
</comment>
<comment type="cofactor">
    <cofactor evidence="1">
        <name>Mg(2+)</name>
        <dbReference type="ChEBI" id="CHEBI:18420"/>
    </cofactor>
    <text evidence="1">Binds 1 Mg(2+) ion per subunit.</text>
</comment>
<comment type="subunit">
    <text evidence="1">Heterohexadecamer of 8 large chains and 8 small chains; disulfide-linked. The disulfide link is formed within the large subunit homodimers.</text>
</comment>
<comment type="subcellular location">
    <subcellularLocation>
        <location>Plastid</location>
        <location>Chloroplast</location>
    </subcellularLocation>
</comment>
<comment type="PTM">
    <text evidence="1">The disulfide bond which can form in the large chain dimeric partners within the hexadecamer appears to be associated with oxidative stress and protein turnover.</text>
</comment>
<comment type="miscellaneous">
    <text evidence="1">The basic functional RuBisCO is composed of a large chain homodimer in a 'head-to-tail' conformation. In form I RuBisCO this homodimer is arranged in a barrel-like tetramer with the small subunits forming a tetrameric 'cap' on each end of the 'barrel'.</text>
</comment>
<comment type="similarity">
    <text evidence="1">Belongs to the RuBisCO large chain family. Type I subfamily.</text>
</comment>
<evidence type="ECO:0000255" key="1">
    <source>
        <dbReference type="HAMAP-Rule" id="MF_01338"/>
    </source>
</evidence>
<gene>
    <name evidence="1" type="primary">rbcL</name>
</gene>
<name>RBL_FAGEA</name>